<reference key="1">
    <citation type="submission" date="2008-04" db="EMBL/GenBank/DDBJ databases">
        <authorList>
            <consortium name="NIH - Xenopus Gene Collection (XGC) project"/>
        </authorList>
    </citation>
    <scope>NUCLEOTIDE SEQUENCE [LARGE SCALE MRNA]</scope>
    <source>
        <tissue>Embryo</tissue>
    </source>
</reference>
<accession>B1WAR9</accession>
<protein>
    <recommendedName>
        <fullName>Serine/threonine-protein kinase greatwall</fullName>
        <shortName>GW</shortName>
        <shortName>GWL</shortName>
        <ecNumber>2.7.11.1</ecNumber>
    </recommendedName>
    <alternativeName>
        <fullName>Microtubule-associated serine/threonine-protein kinase-like</fullName>
        <shortName>MAST-L</shortName>
    </alternativeName>
</protein>
<keyword id="KW-0067">ATP-binding</keyword>
<keyword id="KW-0131">Cell cycle</keyword>
<keyword id="KW-0132">Cell division</keyword>
<keyword id="KW-0963">Cytoplasm</keyword>
<keyword id="KW-0206">Cytoskeleton</keyword>
<keyword id="KW-0418">Kinase</keyword>
<keyword id="KW-0498">Mitosis</keyword>
<keyword id="KW-0547">Nucleotide-binding</keyword>
<keyword id="KW-0539">Nucleus</keyword>
<keyword id="KW-0597">Phosphoprotein</keyword>
<keyword id="KW-1185">Reference proteome</keyword>
<keyword id="KW-0723">Serine/threonine-protein kinase</keyword>
<keyword id="KW-0808">Transferase</keyword>
<dbReference type="EC" id="2.7.11.1"/>
<dbReference type="EMBL" id="BC161476">
    <property type="protein sequence ID" value="AAI61476.1"/>
    <property type="molecule type" value="mRNA"/>
</dbReference>
<dbReference type="RefSeq" id="NP_001120546.1">
    <property type="nucleotide sequence ID" value="NM_001127074.1"/>
</dbReference>
<dbReference type="SMR" id="B1WAR9"/>
<dbReference type="FunCoup" id="B1WAR9">
    <property type="interactions" value="2544"/>
</dbReference>
<dbReference type="STRING" id="8364.ENSXETP00000047529"/>
<dbReference type="PaxDb" id="8364-ENSXETP00000040639"/>
<dbReference type="GeneID" id="100145700"/>
<dbReference type="KEGG" id="xtr:100145700"/>
<dbReference type="AGR" id="Xenbase:XB-GENE-964548"/>
<dbReference type="CTD" id="84930"/>
<dbReference type="Xenbase" id="XB-GENE-964548">
    <property type="gene designation" value="mastl"/>
</dbReference>
<dbReference type="eggNOG" id="KOG0606">
    <property type="taxonomic scope" value="Eukaryota"/>
</dbReference>
<dbReference type="InParanoid" id="B1WAR9"/>
<dbReference type="OMA" id="VMKKNEM"/>
<dbReference type="OrthoDB" id="162894at2759"/>
<dbReference type="Proteomes" id="UP000008143">
    <property type="component" value="Chromosome 6"/>
</dbReference>
<dbReference type="GO" id="GO:0005813">
    <property type="term" value="C:centrosome"/>
    <property type="evidence" value="ECO:0000250"/>
    <property type="project" value="UniProtKB"/>
</dbReference>
<dbReference type="GO" id="GO:0032154">
    <property type="term" value="C:cleavage furrow"/>
    <property type="evidence" value="ECO:0000250"/>
    <property type="project" value="UniProtKB"/>
</dbReference>
<dbReference type="GO" id="GO:0005737">
    <property type="term" value="C:cytoplasm"/>
    <property type="evidence" value="ECO:0007669"/>
    <property type="project" value="UniProtKB-KW"/>
</dbReference>
<dbReference type="GO" id="GO:0005634">
    <property type="term" value="C:nucleus"/>
    <property type="evidence" value="ECO:0000250"/>
    <property type="project" value="UniProtKB"/>
</dbReference>
<dbReference type="GO" id="GO:0005524">
    <property type="term" value="F:ATP binding"/>
    <property type="evidence" value="ECO:0007669"/>
    <property type="project" value="UniProtKB-KW"/>
</dbReference>
<dbReference type="GO" id="GO:0051721">
    <property type="term" value="F:protein phosphatase 2A binding"/>
    <property type="evidence" value="ECO:0000250"/>
    <property type="project" value="UniProtKB"/>
</dbReference>
<dbReference type="GO" id="GO:0106310">
    <property type="term" value="F:protein serine kinase activity"/>
    <property type="evidence" value="ECO:0007669"/>
    <property type="project" value="RHEA"/>
</dbReference>
<dbReference type="GO" id="GO:0004674">
    <property type="term" value="F:protein serine/threonine kinase activity"/>
    <property type="evidence" value="ECO:0000250"/>
    <property type="project" value="UniProtKB"/>
</dbReference>
<dbReference type="GO" id="GO:0051301">
    <property type="term" value="P:cell division"/>
    <property type="evidence" value="ECO:0007669"/>
    <property type="project" value="UniProtKB-KW"/>
</dbReference>
<dbReference type="GO" id="GO:0006974">
    <property type="term" value="P:DNA damage response"/>
    <property type="evidence" value="ECO:0000250"/>
    <property type="project" value="UniProtKB"/>
</dbReference>
<dbReference type="GO" id="GO:0000086">
    <property type="term" value="P:G2/M transition of mitotic cell cycle"/>
    <property type="evidence" value="ECO:0000250"/>
    <property type="project" value="UniProtKB"/>
</dbReference>
<dbReference type="GO" id="GO:0000278">
    <property type="term" value="P:mitotic cell cycle"/>
    <property type="evidence" value="ECO:0000250"/>
    <property type="project" value="UniProtKB"/>
</dbReference>
<dbReference type="CDD" id="cd05610">
    <property type="entry name" value="STKc_MASTL"/>
    <property type="match status" value="1"/>
</dbReference>
<dbReference type="FunFam" id="1.10.510.10:FF:000278">
    <property type="entry name" value="serine/threonine-protein kinase greatwall isoform X1"/>
    <property type="match status" value="1"/>
</dbReference>
<dbReference type="FunFam" id="3.30.200.20:FF:000277">
    <property type="entry name" value="serine/threonine-protein kinase greatwall isoform X1"/>
    <property type="match status" value="1"/>
</dbReference>
<dbReference type="FunFam" id="1.10.510.10:FF:000484">
    <property type="entry name" value="Serine/threonine-protein kinase greatwall, putative"/>
    <property type="match status" value="1"/>
</dbReference>
<dbReference type="Gene3D" id="3.30.200.20">
    <property type="entry name" value="Phosphorylase Kinase, domain 1"/>
    <property type="match status" value="2"/>
</dbReference>
<dbReference type="Gene3D" id="1.10.510.10">
    <property type="entry name" value="Transferase(Phosphotransferase) domain 1"/>
    <property type="match status" value="2"/>
</dbReference>
<dbReference type="InterPro" id="IPR000961">
    <property type="entry name" value="AGC-kinase_C"/>
</dbReference>
<dbReference type="InterPro" id="IPR011009">
    <property type="entry name" value="Kinase-like_dom_sf"/>
</dbReference>
<dbReference type="InterPro" id="IPR037638">
    <property type="entry name" value="MASTL_STKc"/>
</dbReference>
<dbReference type="InterPro" id="IPR000719">
    <property type="entry name" value="Prot_kinase_dom"/>
</dbReference>
<dbReference type="InterPro" id="IPR008271">
    <property type="entry name" value="Ser/Thr_kinase_AS"/>
</dbReference>
<dbReference type="InterPro" id="IPR050236">
    <property type="entry name" value="Ser_Thr_kinase_AGC"/>
</dbReference>
<dbReference type="PANTHER" id="PTHR24356">
    <property type="entry name" value="SERINE/THREONINE-PROTEIN KINASE"/>
    <property type="match status" value="1"/>
</dbReference>
<dbReference type="PANTHER" id="PTHR24356:SF1">
    <property type="entry name" value="SERINE_THREONINE-PROTEIN KINASE GREATWALL"/>
    <property type="match status" value="1"/>
</dbReference>
<dbReference type="Pfam" id="PF00069">
    <property type="entry name" value="Pkinase"/>
    <property type="match status" value="2"/>
</dbReference>
<dbReference type="SMART" id="SM00220">
    <property type="entry name" value="S_TKc"/>
    <property type="match status" value="1"/>
</dbReference>
<dbReference type="SUPFAM" id="SSF56112">
    <property type="entry name" value="Protein kinase-like (PK-like)"/>
    <property type="match status" value="1"/>
</dbReference>
<dbReference type="PROSITE" id="PS51285">
    <property type="entry name" value="AGC_KINASE_CTER"/>
    <property type="match status" value="1"/>
</dbReference>
<dbReference type="PROSITE" id="PS50011">
    <property type="entry name" value="PROTEIN_KINASE_DOM"/>
    <property type="match status" value="1"/>
</dbReference>
<dbReference type="PROSITE" id="PS00108">
    <property type="entry name" value="PROTEIN_KINASE_ST"/>
    <property type="match status" value="1"/>
</dbReference>
<gene>
    <name type="primary">mastl</name>
    <name type="synonym">gw</name>
    <name type="synonym">gwl</name>
</gene>
<feature type="chain" id="PRO_0000408319" description="Serine/threonine-protein kinase greatwall">
    <location>
        <begin position="1"/>
        <end position="890"/>
    </location>
</feature>
<feature type="domain" description="Protein kinase" evidence="2">
    <location>
        <begin position="33"/>
        <end position="846"/>
    </location>
</feature>
<feature type="domain" description="AGC-kinase C-terminal" evidence="3">
    <location>
        <begin position="847"/>
        <end position="890"/>
    </location>
</feature>
<feature type="region of interest" description="Disordered" evidence="5">
    <location>
        <begin position="324"/>
        <end position="353"/>
    </location>
</feature>
<feature type="region of interest" description="Disordered" evidence="5">
    <location>
        <begin position="412"/>
        <end position="434"/>
    </location>
</feature>
<feature type="region of interest" description="Disordered" evidence="5">
    <location>
        <begin position="517"/>
        <end position="541"/>
    </location>
</feature>
<feature type="region of interest" description="Disordered" evidence="5">
    <location>
        <begin position="559"/>
        <end position="592"/>
    </location>
</feature>
<feature type="region of interest" description="Disordered" evidence="5">
    <location>
        <begin position="609"/>
        <end position="628"/>
    </location>
</feature>
<feature type="compositionally biased region" description="Basic and acidic residues" evidence="5">
    <location>
        <begin position="412"/>
        <end position="425"/>
    </location>
</feature>
<feature type="compositionally biased region" description="Polar residues" evidence="5">
    <location>
        <begin position="576"/>
        <end position="592"/>
    </location>
</feature>
<feature type="compositionally biased region" description="Acidic residues" evidence="5">
    <location>
        <begin position="615"/>
        <end position="624"/>
    </location>
</feature>
<feature type="active site" description="Proton acceptor" evidence="2 4">
    <location>
        <position position="156"/>
    </location>
</feature>
<feature type="binding site" evidence="2">
    <location>
        <begin position="39"/>
        <end position="47"/>
    </location>
    <ligand>
        <name>ATP</name>
        <dbReference type="ChEBI" id="CHEBI:30616"/>
    </ligand>
</feature>
<feature type="binding site" evidence="2">
    <location>
        <position position="62"/>
    </location>
    <ligand>
        <name>ATP</name>
        <dbReference type="ChEBI" id="CHEBI:30616"/>
    </ligand>
</feature>
<feature type="modified residue" description="Phosphothreonine; by CDK1" evidence="1">
    <location>
        <position position="752"/>
    </location>
</feature>
<proteinExistence type="evidence at transcript level"/>
<evidence type="ECO:0000250" key="1"/>
<evidence type="ECO:0000255" key="2">
    <source>
        <dbReference type="PROSITE-ProRule" id="PRU00159"/>
    </source>
</evidence>
<evidence type="ECO:0000255" key="3">
    <source>
        <dbReference type="PROSITE-ProRule" id="PRU00618"/>
    </source>
</evidence>
<evidence type="ECO:0000255" key="4">
    <source>
        <dbReference type="PROSITE-ProRule" id="PRU10027"/>
    </source>
</evidence>
<evidence type="ECO:0000256" key="5">
    <source>
        <dbReference type="SAM" id="MobiDB-lite"/>
    </source>
</evidence>
<evidence type="ECO:0000305" key="6"/>
<comment type="function">
    <text evidence="1">Serine/threonine kinase that plays a key role in M phase by acting as a regulator of mitosis entry and maintenance. Acts by promoting the inactivation of protein phosphatase 2A (PP2A) during M phase: does not directly inhibit PP2A but acts by mediating phosphorylation and subsequent activation of arpp19 and ensa at 'Ser-67', 2 phosphatase inhibitors that specifically inhibit the ppp2r2d (PR55-delta) subunit of PP2A. Inactivation of PP2A during M phase is essential to keep cyclin-B1-CDK1 activity high. Following DNA damage, it is also involved in checkpoint recovery by being inhibited (By similarity).</text>
</comment>
<comment type="catalytic activity">
    <reaction>
        <text>L-seryl-[protein] + ATP = O-phospho-L-seryl-[protein] + ADP + H(+)</text>
        <dbReference type="Rhea" id="RHEA:17989"/>
        <dbReference type="Rhea" id="RHEA-COMP:9863"/>
        <dbReference type="Rhea" id="RHEA-COMP:11604"/>
        <dbReference type="ChEBI" id="CHEBI:15378"/>
        <dbReference type="ChEBI" id="CHEBI:29999"/>
        <dbReference type="ChEBI" id="CHEBI:30616"/>
        <dbReference type="ChEBI" id="CHEBI:83421"/>
        <dbReference type="ChEBI" id="CHEBI:456216"/>
        <dbReference type="EC" id="2.7.11.1"/>
    </reaction>
</comment>
<comment type="catalytic activity">
    <reaction>
        <text>L-threonyl-[protein] + ATP = O-phospho-L-threonyl-[protein] + ADP + H(+)</text>
        <dbReference type="Rhea" id="RHEA:46608"/>
        <dbReference type="Rhea" id="RHEA-COMP:11060"/>
        <dbReference type="Rhea" id="RHEA-COMP:11605"/>
        <dbReference type="ChEBI" id="CHEBI:15378"/>
        <dbReference type="ChEBI" id="CHEBI:30013"/>
        <dbReference type="ChEBI" id="CHEBI:30616"/>
        <dbReference type="ChEBI" id="CHEBI:61977"/>
        <dbReference type="ChEBI" id="CHEBI:456216"/>
        <dbReference type="EC" id="2.7.11.1"/>
    </reaction>
</comment>
<comment type="subcellular location">
    <subcellularLocation>
        <location evidence="1">Cytoplasm</location>
        <location evidence="1">Cytoskeleton</location>
        <location evidence="1">Microtubule organizing center</location>
        <location evidence="1">Centrosome</location>
    </subcellularLocation>
    <subcellularLocation>
        <location>Nucleus</location>
    </subcellularLocation>
    <text evidence="1">During interphase is mainly nuclear, upon nuclear envelope breakdown localizes at the cytoplasm and during mitosis at the centrosomes.</text>
</comment>
<comment type="PTM">
    <text evidence="1">Phosphorylation at Thr-752 by CDK1 during M phase activates its kinase activity. Maximum phosphorylation occurs in prometaphase (By similarity).</text>
</comment>
<comment type="similarity">
    <text evidence="6">Belongs to the protein kinase superfamily. AGC Ser/Thr protein kinase family.</text>
</comment>
<name>GWL_XENTR</name>
<sequence length="890" mass="98557">MGVVVAETSQNGDISLLSEKKFTVPQPPSIEEFSIVKPISRGAFGKVYLARRKNNNKLFAVKVVKKADMINKNMVQQVQAERDALALSKSPFIVHLYYSLQSANNIYLIMEYLIGGDVKSLLHIYGYFDEEMAVKYISEVALALDYLHRHGIIHRDLKPDNMLISNEGHIKLTDFGLSKVTLKRELSMMDILTTPSMAKPKRDYSRTPGQVLSLISSLGFNTPVGGRTQGSIAQQTEGMRGNASTPLLMKKKENSVKGNKLMISCPEAGLSSPSMPVKCLTPNLLKCRTPFTTSSTSSQSRICLSSLESECGMSPRWENCSQDAEAPPYLNSSRVKDCSSEQARSKKPMGSSASQNLKHLEFAFSPIVDRRTGKKAGFQDETGELSDTPLATLGAKGVIRKCLYDNNAQEKHKDLGKDDQGELEKLTISPDSPPWLANGSVAPIQFNDDEIIEKMGIKRNYDLVEKSPEQEVLQDKKTNTDYKRGCTITGYPVSQSTGLTMEINSLFLSELRSSTNNYASDRKSEDDYISAPRTHENLGSGNTIAKNLLCELDDNCERDGEANSNSGCEEGENQKESLNQDSESSSADMSVTENQIERELCQVDKSIKELSFEESPSESNEETTPENKGMAFMAENDALKREPNRSVLPETLHNVLASPAPTSAMAHPRRKPMVAFRSYNSPINGSNLSEPSRISMNSADKIHFSLGCTGSFPMAVTPAQKKVQGLTETPYRTPKTVRRGGLQAENERILGTPDYLAPELLLGKSHGPAVDWWALGVCLFEFLTGIPPFNDETPSQVFQNILNRDIPWPEEEETLSVNAQSAIEILLAIDQTKRAGLKDLKAHHLFHAIEWDDLQNLPMPFIPQPDDETDTTYFEARNNAQHLKVSGFSL</sequence>
<organism>
    <name type="scientific">Xenopus tropicalis</name>
    <name type="common">Western clawed frog</name>
    <name type="synonym">Silurana tropicalis</name>
    <dbReference type="NCBI Taxonomy" id="8364"/>
    <lineage>
        <taxon>Eukaryota</taxon>
        <taxon>Metazoa</taxon>
        <taxon>Chordata</taxon>
        <taxon>Craniata</taxon>
        <taxon>Vertebrata</taxon>
        <taxon>Euteleostomi</taxon>
        <taxon>Amphibia</taxon>
        <taxon>Batrachia</taxon>
        <taxon>Anura</taxon>
        <taxon>Pipoidea</taxon>
        <taxon>Pipidae</taxon>
        <taxon>Xenopodinae</taxon>
        <taxon>Xenopus</taxon>
        <taxon>Silurana</taxon>
    </lineage>
</organism>